<organism>
    <name type="scientific">Staphylococcus aureus (strain MSSA476)</name>
    <dbReference type="NCBI Taxonomy" id="282459"/>
    <lineage>
        <taxon>Bacteria</taxon>
        <taxon>Bacillati</taxon>
        <taxon>Bacillota</taxon>
        <taxon>Bacilli</taxon>
        <taxon>Bacillales</taxon>
        <taxon>Staphylococcaceae</taxon>
        <taxon>Staphylococcus</taxon>
    </lineage>
</organism>
<feature type="chain" id="PRO_0000163101" description="Molybdopterin synthase catalytic subunit">
    <location>
        <begin position="1"/>
        <end position="148"/>
    </location>
</feature>
<feature type="binding site" evidence="1">
    <location>
        <begin position="34"/>
        <end position="36"/>
    </location>
    <ligand>
        <name>substrate</name>
    </ligand>
</feature>
<feature type="binding site" evidence="1">
    <location>
        <position position="44"/>
    </location>
    <ligand>
        <name>substrate</name>
    </ligand>
</feature>
<feature type="binding site" evidence="1">
    <location>
        <begin position="100"/>
        <end position="101"/>
    </location>
    <ligand>
        <name>substrate</name>
    </ligand>
</feature>
<feature type="binding site" evidence="1">
    <location>
        <position position="116"/>
    </location>
    <ligand>
        <name>substrate</name>
    </ligand>
</feature>
<feature type="binding site" evidence="1">
    <location>
        <begin position="123"/>
        <end position="125"/>
    </location>
    <ligand>
        <name>substrate</name>
    </ligand>
</feature>
<name>MOAE_STAAS</name>
<keyword id="KW-0501">Molybdenum cofactor biosynthesis</keyword>
<keyword id="KW-0808">Transferase</keyword>
<evidence type="ECO:0000250" key="1"/>
<evidence type="ECO:0000305" key="2"/>
<sequence length="148" mass="17339">MKQFEIVTEPIQTEQYREFTINEYQGAVVVFTGHVREWTKGVKTEYLEYEAYIPMAEKKLAQIGDEINEKWPGTITSIVHRIGPLQISDIAVLIAVSSPHRKDAYRANEYAIERIKEIVPIWKKEIWEDGSKWQGHQKGNYEEAKREE</sequence>
<reference key="1">
    <citation type="journal article" date="2004" name="Proc. Natl. Acad. Sci. U.S.A.">
        <title>Complete genomes of two clinical Staphylococcus aureus strains: evidence for the rapid evolution of virulence and drug resistance.</title>
        <authorList>
            <person name="Holden M.T.G."/>
            <person name="Feil E.J."/>
            <person name="Lindsay J.A."/>
            <person name="Peacock S.J."/>
            <person name="Day N.P.J."/>
            <person name="Enright M.C."/>
            <person name="Foster T.J."/>
            <person name="Moore C.E."/>
            <person name="Hurst L."/>
            <person name="Atkin R."/>
            <person name="Barron A."/>
            <person name="Bason N."/>
            <person name="Bentley S.D."/>
            <person name="Chillingworth C."/>
            <person name="Chillingworth T."/>
            <person name="Churcher C."/>
            <person name="Clark L."/>
            <person name="Corton C."/>
            <person name="Cronin A."/>
            <person name="Doggett J."/>
            <person name="Dowd L."/>
            <person name="Feltwell T."/>
            <person name="Hance Z."/>
            <person name="Harris B."/>
            <person name="Hauser H."/>
            <person name="Holroyd S."/>
            <person name="Jagels K."/>
            <person name="James K.D."/>
            <person name="Lennard N."/>
            <person name="Line A."/>
            <person name="Mayes R."/>
            <person name="Moule S."/>
            <person name="Mungall K."/>
            <person name="Ormond D."/>
            <person name="Quail M.A."/>
            <person name="Rabbinowitsch E."/>
            <person name="Rutherford K.M."/>
            <person name="Sanders M."/>
            <person name="Sharp S."/>
            <person name="Simmonds M."/>
            <person name="Stevens K."/>
            <person name="Whitehead S."/>
            <person name="Barrell B.G."/>
            <person name="Spratt B.G."/>
            <person name="Parkhill J."/>
        </authorList>
    </citation>
    <scope>NUCLEOTIDE SEQUENCE [LARGE SCALE GENOMIC DNA]</scope>
    <source>
        <strain>MSSA476</strain>
    </source>
</reference>
<proteinExistence type="inferred from homology"/>
<accession>Q6G751</accession>
<gene>
    <name type="primary">moaE</name>
    <name type="ordered locus">SAS2161</name>
</gene>
<comment type="function">
    <text evidence="1">Converts molybdopterin precursor Z into molybdopterin. This requires the incorporation of two sulfur atoms into precursor Z to generate a dithiolene group. The sulfur is provided by MoaD (By similarity).</text>
</comment>
<comment type="catalytic activity">
    <reaction>
        <text>2 [molybdopterin-synthase sulfur-carrier protein]-C-terminal-Gly-aminoethanethioate + cyclic pyranopterin phosphate + H2O = molybdopterin + 2 [molybdopterin-synthase sulfur-carrier protein]-C-terminal Gly-Gly + 2 H(+)</text>
        <dbReference type="Rhea" id="RHEA:26333"/>
        <dbReference type="Rhea" id="RHEA-COMP:12202"/>
        <dbReference type="Rhea" id="RHEA-COMP:19907"/>
        <dbReference type="ChEBI" id="CHEBI:15377"/>
        <dbReference type="ChEBI" id="CHEBI:15378"/>
        <dbReference type="ChEBI" id="CHEBI:58698"/>
        <dbReference type="ChEBI" id="CHEBI:59648"/>
        <dbReference type="ChEBI" id="CHEBI:90778"/>
        <dbReference type="ChEBI" id="CHEBI:232372"/>
        <dbReference type="EC" id="2.8.1.12"/>
    </reaction>
</comment>
<comment type="pathway">
    <text>Cofactor biosynthesis; molybdopterin biosynthesis.</text>
</comment>
<comment type="subunit">
    <text evidence="1">Heterotetramer of 2 MoaD subunits and 2 MoaE subunits. Also stable as homodimer. The enzyme changes between these two forms during catalysis (By similarity).</text>
</comment>
<comment type="similarity">
    <text evidence="2">Belongs to the MoaE family.</text>
</comment>
<dbReference type="EC" id="2.8.1.12"/>
<dbReference type="EMBL" id="BX571857">
    <property type="protein sequence ID" value="CAG43972.1"/>
    <property type="molecule type" value="Genomic_DNA"/>
</dbReference>
<dbReference type="RefSeq" id="WP_000808500.1">
    <property type="nucleotide sequence ID" value="NC_002953.3"/>
</dbReference>
<dbReference type="SMR" id="Q6G751"/>
<dbReference type="KEGG" id="sas:SAS2161"/>
<dbReference type="HOGENOM" id="CLU_089568_1_2_9"/>
<dbReference type="UniPathway" id="UPA00344"/>
<dbReference type="GO" id="GO:0030366">
    <property type="term" value="F:molybdopterin synthase activity"/>
    <property type="evidence" value="ECO:0007669"/>
    <property type="project" value="UniProtKB-EC"/>
</dbReference>
<dbReference type="GO" id="GO:0006777">
    <property type="term" value="P:Mo-molybdopterin cofactor biosynthetic process"/>
    <property type="evidence" value="ECO:0007669"/>
    <property type="project" value="UniProtKB-KW"/>
</dbReference>
<dbReference type="CDD" id="cd00756">
    <property type="entry name" value="MoaE"/>
    <property type="match status" value="1"/>
</dbReference>
<dbReference type="FunFam" id="3.90.1170.40:FF:000003">
    <property type="entry name" value="Molybdopterin converting factor subunit 2"/>
    <property type="match status" value="1"/>
</dbReference>
<dbReference type="Gene3D" id="3.90.1170.40">
    <property type="entry name" value="Molybdopterin biosynthesis MoaE subunit"/>
    <property type="match status" value="1"/>
</dbReference>
<dbReference type="InterPro" id="IPR036563">
    <property type="entry name" value="MoaE_sf"/>
</dbReference>
<dbReference type="InterPro" id="IPR003448">
    <property type="entry name" value="Mopterin_biosynth_MoaE"/>
</dbReference>
<dbReference type="PANTHER" id="PTHR23404">
    <property type="entry name" value="MOLYBDOPTERIN SYNTHASE RELATED"/>
    <property type="match status" value="1"/>
</dbReference>
<dbReference type="Pfam" id="PF02391">
    <property type="entry name" value="MoaE"/>
    <property type="match status" value="1"/>
</dbReference>
<dbReference type="SUPFAM" id="SSF54690">
    <property type="entry name" value="Molybdopterin synthase subunit MoaE"/>
    <property type="match status" value="1"/>
</dbReference>
<protein>
    <recommendedName>
        <fullName>Molybdopterin synthase catalytic subunit</fullName>
        <ecNumber>2.8.1.12</ecNumber>
    </recommendedName>
    <alternativeName>
        <fullName>MPT synthase subunit 2</fullName>
    </alternativeName>
    <alternativeName>
        <fullName>Molybdenum cofactor biosynthesis protein E</fullName>
    </alternativeName>
    <alternativeName>
        <fullName>Molybdopterin-converting factor large subunit</fullName>
    </alternativeName>
    <alternativeName>
        <fullName>Molybdopterin-converting factor subunit 2</fullName>
    </alternativeName>
</protein>